<keyword id="KW-0240">DNA-directed RNA polymerase</keyword>
<keyword id="KW-0548">Nucleotidyltransferase</keyword>
<keyword id="KW-0804">Transcription</keyword>
<keyword id="KW-0808">Transferase</keyword>
<evidence type="ECO:0000255" key="1">
    <source>
        <dbReference type="HAMAP-Rule" id="MF_00059"/>
    </source>
</evidence>
<feature type="chain" id="PRO_0000323621" description="DNA-directed RNA polymerase subunit alpha">
    <location>
        <begin position="1"/>
        <end position="330"/>
    </location>
</feature>
<feature type="region of interest" description="Alpha N-terminal domain (alpha-NTD)" evidence="1">
    <location>
        <begin position="1"/>
        <end position="231"/>
    </location>
</feature>
<feature type="region of interest" description="Alpha C-terminal domain (alpha-CTD)" evidence="1">
    <location>
        <begin position="253"/>
        <end position="330"/>
    </location>
</feature>
<proteinExistence type="inferred from homology"/>
<dbReference type="EC" id="2.7.7.6" evidence="1"/>
<dbReference type="EMBL" id="CP000139">
    <property type="protein sequence ID" value="ABR38484.1"/>
    <property type="molecule type" value="Genomic_DNA"/>
</dbReference>
<dbReference type="RefSeq" id="WP_005844902.1">
    <property type="nucleotide sequence ID" value="NZ_JANSWM010000035.1"/>
</dbReference>
<dbReference type="SMR" id="A6KYH0"/>
<dbReference type="STRING" id="435590.BVU_0780"/>
<dbReference type="PaxDb" id="435590-BVU_0780"/>
<dbReference type="KEGG" id="bvu:BVU_0780"/>
<dbReference type="eggNOG" id="COG0202">
    <property type="taxonomic scope" value="Bacteria"/>
</dbReference>
<dbReference type="HOGENOM" id="CLU_053084_0_1_10"/>
<dbReference type="BioCyc" id="BVUL435590:G1G59-820-MONOMER"/>
<dbReference type="Proteomes" id="UP000002861">
    <property type="component" value="Chromosome"/>
</dbReference>
<dbReference type="GO" id="GO:0005737">
    <property type="term" value="C:cytoplasm"/>
    <property type="evidence" value="ECO:0007669"/>
    <property type="project" value="UniProtKB-ARBA"/>
</dbReference>
<dbReference type="GO" id="GO:0000428">
    <property type="term" value="C:DNA-directed RNA polymerase complex"/>
    <property type="evidence" value="ECO:0007669"/>
    <property type="project" value="UniProtKB-KW"/>
</dbReference>
<dbReference type="GO" id="GO:0003677">
    <property type="term" value="F:DNA binding"/>
    <property type="evidence" value="ECO:0007669"/>
    <property type="project" value="UniProtKB-UniRule"/>
</dbReference>
<dbReference type="GO" id="GO:0003899">
    <property type="term" value="F:DNA-directed RNA polymerase activity"/>
    <property type="evidence" value="ECO:0007669"/>
    <property type="project" value="UniProtKB-UniRule"/>
</dbReference>
<dbReference type="GO" id="GO:0046983">
    <property type="term" value="F:protein dimerization activity"/>
    <property type="evidence" value="ECO:0007669"/>
    <property type="project" value="InterPro"/>
</dbReference>
<dbReference type="GO" id="GO:0006351">
    <property type="term" value="P:DNA-templated transcription"/>
    <property type="evidence" value="ECO:0007669"/>
    <property type="project" value="UniProtKB-UniRule"/>
</dbReference>
<dbReference type="CDD" id="cd06928">
    <property type="entry name" value="RNAP_alpha_NTD"/>
    <property type="match status" value="1"/>
</dbReference>
<dbReference type="FunFam" id="1.10.150.20:FF:000020">
    <property type="entry name" value="DNA-directed RNA polymerase subunit alpha"/>
    <property type="match status" value="1"/>
</dbReference>
<dbReference type="FunFam" id="2.170.120.12:FF:000001">
    <property type="entry name" value="DNA-directed RNA polymerase subunit alpha"/>
    <property type="match status" value="1"/>
</dbReference>
<dbReference type="Gene3D" id="1.10.150.20">
    <property type="entry name" value="5' to 3' exonuclease, C-terminal subdomain"/>
    <property type="match status" value="1"/>
</dbReference>
<dbReference type="Gene3D" id="2.170.120.12">
    <property type="entry name" value="DNA-directed RNA polymerase, insert domain"/>
    <property type="match status" value="1"/>
</dbReference>
<dbReference type="Gene3D" id="3.30.1360.10">
    <property type="entry name" value="RNA polymerase, RBP11-like subunit"/>
    <property type="match status" value="1"/>
</dbReference>
<dbReference type="HAMAP" id="MF_00059">
    <property type="entry name" value="RNApol_bact_RpoA"/>
    <property type="match status" value="1"/>
</dbReference>
<dbReference type="InterPro" id="IPR011262">
    <property type="entry name" value="DNA-dir_RNA_pol_insert"/>
</dbReference>
<dbReference type="InterPro" id="IPR011263">
    <property type="entry name" value="DNA-dir_RNA_pol_RpoA/D/Rpb3"/>
</dbReference>
<dbReference type="InterPro" id="IPR011773">
    <property type="entry name" value="DNA-dir_RpoA"/>
</dbReference>
<dbReference type="InterPro" id="IPR036603">
    <property type="entry name" value="RBP11-like"/>
</dbReference>
<dbReference type="InterPro" id="IPR011260">
    <property type="entry name" value="RNAP_asu_C"/>
</dbReference>
<dbReference type="InterPro" id="IPR036643">
    <property type="entry name" value="RNApol_insert_sf"/>
</dbReference>
<dbReference type="NCBIfam" id="NF003513">
    <property type="entry name" value="PRK05182.1-2"/>
    <property type="match status" value="1"/>
</dbReference>
<dbReference type="NCBIfam" id="NF003516">
    <property type="entry name" value="PRK05182.2-2"/>
    <property type="match status" value="1"/>
</dbReference>
<dbReference type="NCBIfam" id="NF003519">
    <property type="entry name" value="PRK05182.2-5"/>
    <property type="match status" value="1"/>
</dbReference>
<dbReference type="NCBIfam" id="TIGR02027">
    <property type="entry name" value="rpoA"/>
    <property type="match status" value="1"/>
</dbReference>
<dbReference type="Pfam" id="PF01000">
    <property type="entry name" value="RNA_pol_A_bac"/>
    <property type="match status" value="1"/>
</dbReference>
<dbReference type="Pfam" id="PF03118">
    <property type="entry name" value="RNA_pol_A_CTD"/>
    <property type="match status" value="1"/>
</dbReference>
<dbReference type="Pfam" id="PF01193">
    <property type="entry name" value="RNA_pol_L"/>
    <property type="match status" value="1"/>
</dbReference>
<dbReference type="SMART" id="SM00662">
    <property type="entry name" value="RPOLD"/>
    <property type="match status" value="1"/>
</dbReference>
<dbReference type="SUPFAM" id="SSF47789">
    <property type="entry name" value="C-terminal domain of RNA polymerase alpha subunit"/>
    <property type="match status" value="1"/>
</dbReference>
<dbReference type="SUPFAM" id="SSF56553">
    <property type="entry name" value="Insert subdomain of RNA polymerase alpha subunit"/>
    <property type="match status" value="1"/>
</dbReference>
<dbReference type="SUPFAM" id="SSF55257">
    <property type="entry name" value="RBP11-like subunits of RNA polymerase"/>
    <property type="match status" value="1"/>
</dbReference>
<organism>
    <name type="scientific">Phocaeicola vulgatus (strain ATCC 8482 / DSM 1447 / JCM 5826 / CCUG 4940 / NBRC 14291 / NCTC 11154)</name>
    <name type="common">Bacteroides vulgatus</name>
    <dbReference type="NCBI Taxonomy" id="435590"/>
    <lineage>
        <taxon>Bacteria</taxon>
        <taxon>Pseudomonadati</taxon>
        <taxon>Bacteroidota</taxon>
        <taxon>Bacteroidia</taxon>
        <taxon>Bacteroidales</taxon>
        <taxon>Bacteroidaceae</taxon>
        <taxon>Phocaeicola</taxon>
    </lineage>
</organism>
<name>RPOA_PHOV8</name>
<accession>A6KYH0</accession>
<comment type="function">
    <text evidence="1">DNA-dependent RNA polymerase catalyzes the transcription of DNA into RNA using the four ribonucleoside triphosphates as substrates.</text>
</comment>
<comment type="catalytic activity">
    <reaction evidence="1">
        <text>RNA(n) + a ribonucleoside 5'-triphosphate = RNA(n+1) + diphosphate</text>
        <dbReference type="Rhea" id="RHEA:21248"/>
        <dbReference type="Rhea" id="RHEA-COMP:14527"/>
        <dbReference type="Rhea" id="RHEA-COMP:17342"/>
        <dbReference type="ChEBI" id="CHEBI:33019"/>
        <dbReference type="ChEBI" id="CHEBI:61557"/>
        <dbReference type="ChEBI" id="CHEBI:140395"/>
        <dbReference type="EC" id="2.7.7.6"/>
    </reaction>
</comment>
<comment type="subunit">
    <text evidence="1">Homodimer. The RNAP catalytic core consists of 2 alpha, 1 beta, 1 beta' and 1 omega subunit. When a sigma factor is associated with the core the holoenzyme is formed, which can initiate transcription.</text>
</comment>
<comment type="domain">
    <text evidence="1">The N-terminal domain is essential for RNAP assembly and basal transcription, whereas the C-terminal domain is involved in interaction with transcriptional regulators and with upstream promoter elements.</text>
</comment>
<comment type="similarity">
    <text evidence="1">Belongs to the RNA polymerase alpha chain family.</text>
</comment>
<gene>
    <name evidence="1" type="primary">rpoA</name>
    <name type="ordered locus">BVU_0780</name>
</gene>
<reference key="1">
    <citation type="journal article" date="2007" name="PLoS Biol.">
        <title>Evolution of symbiotic bacteria in the distal human intestine.</title>
        <authorList>
            <person name="Xu J."/>
            <person name="Mahowald M.A."/>
            <person name="Ley R.E."/>
            <person name="Lozupone C.A."/>
            <person name="Hamady M."/>
            <person name="Martens E.C."/>
            <person name="Henrissat B."/>
            <person name="Coutinho P.M."/>
            <person name="Minx P."/>
            <person name="Latreille P."/>
            <person name="Cordum H."/>
            <person name="Van Brunt A."/>
            <person name="Kim K."/>
            <person name="Fulton R.S."/>
            <person name="Fulton L.A."/>
            <person name="Clifton S.W."/>
            <person name="Wilson R.K."/>
            <person name="Knight R.D."/>
            <person name="Gordon J.I."/>
        </authorList>
    </citation>
    <scope>NUCLEOTIDE SEQUENCE [LARGE SCALE GENOMIC DNA]</scope>
    <source>
        <strain>ATCC 8482 / DSM 1447 / JCM 5826 / CCUG 4940 / NBRC 14291 / NCTC 11154</strain>
    </source>
</reference>
<sequence length="330" mass="37533">MAILAFQKPDKVLMLEADSRFGKFEFRPLEPGFGITVGNALRRILLSSLEGFAINTIKIEGVEHEFASVPGVKEDVTNIILNLKQVRFKQVVEEFENEKVSITVENSSEFKAGDISKYLTGFEVLNPELVICHLDSKATMQMDITINKGRGYVPADENREYCTDVNVIPIDSIYTPIRNVKYQVENFRVEQKTDYEKLVLEITTDGSIHPKEALKEAAKILIYHFMLFSDEKITLETSDVDGNEEFDEEVLHMRQLLKTKLVDMDLSVRALNCLKAADVETLGDLVQFNKTDLLKFRNFGKKSLTELDDLLEGLNLSFGTDISKYKLDKE</sequence>
<protein>
    <recommendedName>
        <fullName evidence="1">DNA-directed RNA polymerase subunit alpha</fullName>
        <shortName evidence="1">RNAP subunit alpha</shortName>
        <ecNumber evidence="1">2.7.7.6</ecNumber>
    </recommendedName>
    <alternativeName>
        <fullName evidence="1">RNA polymerase subunit alpha</fullName>
    </alternativeName>
    <alternativeName>
        <fullName evidence="1">Transcriptase subunit alpha</fullName>
    </alternativeName>
</protein>